<evidence type="ECO:0000255" key="1">
    <source>
        <dbReference type="HAMAP-Rule" id="MF_00368"/>
    </source>
</evidence>
<evidence type="ECO:0000305" key="2"/>
<comment type="function">
    <text evidence="1">Forms part of the ribosomal stalk which helps the ribosome interact with GTP-bound translation factors. Is thus essential for accurate translation.</text>
</comment>
<comment type="subunit">
    <text evidence="1">Homodimer. Part of the ribosomal stalk of the 50S ribosomal subunit. Forms a multimeric L10(L12)X complex, where L10 forms an elongated spine to which 2 to 4 L12 dimers bind in a sequential fashion. Binds GTP-bound translation factors.</text>
</comment>
<comment type="similarity">
    <text evidence="1">Belongs to the bacterial ribosomal protein bL12 family.</text>
</comment>
<sequence>MNKEQILEAIKAMTVLELNDLVKAIEEEFGVTAAAPVAVVAGGAAAAEEKTEFDVVLASAGAEKIKVIKVVREITGLGLKEAKEVVDNAPKALKEGVSKDEAEEIKTKLEEVGASVEVK</sequence>
<reference key="1">
    <citation type="journal article" date="2008" name="J. Bacteriol.">
        <title>Complete genome sequence of the mosquitocidal bacterium Bacillus sphaericus C3-41 and comparison with those of closely related Bacillus species.</title>
        <authorList>
            <person name="Hu X."/>
            <person name="Fan W."/>
            <person name="Han B."/>
            <person name="Liu H."/>
            <person name="Zheng D."/>
            <person name="Li Q."/>
            <person name="Dong W."/>
            <person name="Yan J."/>
            <person name="Gao M."/>
            <person name="Berry C."/>
            <person name="Yuan Z."/>
        </authorList>
    </citation>
    <scope>NUCLEOTIDE SEQUENCE [LARGE SCALE GENOMIC DNA]</scope>
    <source>
        <strain>C3-41</strain>
    </source>
</reference>
<accession>B1HMZ8</accession>
<feature type="chain" id="PRO_1000195803" description="Large ribosomal subunit protein bL12">
    <location>
        <begin position="1"/>
        <end position="119"/>
    </location>
</feature>
<protein>
    <recommendedName>
        <fullName evidence="1">Large ribosomal subunit protein bL12</fullName>
    </recommendedName>
    <alternativeName>
        <fullName evidence="2">50S ribosomal protein L7/L12</fullName>
    </alternativeName>
</protein>
<organism>
    <name type="scientific">Lysinibacillus sphaericus (strain C3-41)</name>
    <dbReference type="NCBI Taxonomy" id="444177"/>
    <lineage>
        <taxon>Bacteria</taxon>
        <taxon>Bacillati</taxon>
        <taxon>Bacillota</taxon>
        <taxon>Bacilli</taxon>
        <taxon>Bacillales</taxon>
        <taxon>Bacillaceae</taxon>
        <taxon>Lysinibacillus</taxon>
    </lineage>
</organism>
<name>RL7_LYSSC</name>
<gene>
    <name evidence="1" type="primary">rplL</name>
    <name type="ordered locus">Bsph_4632</name>
</gene>
<proteinExistence type="inferred from homology"/>
<dbReference type="EMBL" id="CP000817">
    <property type="protein sequence ID" value="ACA42076.1"/>
    <property type="molecule type" value="Genomic_DNA"/>
</dbReference>
<dbReference type="RefSeq" id="WP_012296079.1">
    <property type="nucleotide sequence ID" value="NC_010382.1"/>
</dbReference>
<dbReference type="SMR" id="B1HMZ8"/>
<dbReference type="EnsemblBacteria" id="ACA42076">
    <property type="protein sequence ID" value="ACA42076"/>
    <property type="gene ID" value="Bsph_4632"/>
</dbReference>
<dbReference type="KEGG" id="lsp:Bsph_4632"/>
<dbReference type="HOGENOM" id="CLU_086499_3_2_9"/>
<dbReference type="Proteomes" id="UP000002164">
    <property type="component" value="Chromosome"/>
</dbReference>
<dbReference type="GO" id="GO:0022625">
    <property type="term" value="C:cytosolic large ribosomal subunit"/>
    <property type="evidence" value="ECO:0007669"/>
    <property type="project" value="TreeGrafter"/>
</dbReference>
<dbReference type="GO" id="GO:0003729">
    <property type="term" value="F:mRNA binding"/>
    <property type="evidence" value="ECO:0007669"/>
    <property type="project" value="TreeGrafter"/>
</dbReference>
<dbReference type="GO" id="GO:0003735">
    <property type="term" value="F:structural constituent of ribosome"/>
    <property type="evidence" value="ECO:0007669"/>
    <property type="project" value="InterPro"/>
</dbReference>
<dbReference type="GO" id="GO:0006412">
    <property type="term" value="P:translation"/>
    <property type="evidence" value="ECO:0007669"/>
    <property type="project" value="UniProtKB-UniRule"/>
</dbReference>
<dbReference type="CDD" id="cd00387">
    <property type="entry name" value="Ribosomal_L7_L12"/>
    <property type="match status" value="1"/>
</dbReference>
<dbReference type="FunFam" id="1.20.5.710:FF:000002">
    <property type="entry name" value="50S ribosomal protein L7/L12"/>
    <property type="match status" value="1"/>
</dbReference>
<dbReference type="FunFam" id="3.30.1390.10:FF:000001">
    <property type="entry name" value="50S ribosomal protein L7/L12"/>
    <property type="match status" value="1"/>
</dbReference>
<dbReference type="Gene3D" id="3.30.1390.10">
    <property type="match status" value="1"/>
</dbReference>
<dbReference type="Gene3D" id="1.20.5.710">
    <property type="entry name" value="Single helix bin"/>
    <property type="match status" value="1"/>
</dbReference>
<dbReference type="HAMAP" id="MF_00368">
    <property type="entry name" value="Ribosomal_bL12"/>
    <property type="match status" value="1"/>
</dbReference>
<dbReference type="InterPro" id="IPR000206">
    <property type="entry name" value="Ribosomal_bL12"/>
</dbReference>
<dbReference type="InterPro" id="IPR013823">
    <property type="entry name" value="Ribosomal_bL12_C"/>
</dbReference>
<dbReference type="InterPro" id="IPR014719">
    <property type="entry name" value="Ribosomal_bL12_C/ClpS-like"/>
</dbReference>
<dbReference type="InterPro" id="IPR008932">
    <property type="entry name" value="Ribosomal_bL12_oligo"/>
</dbReference>
<dbReference type="InterPro" id="IPR036235">
    <property type="entry name" value="Ribosomal_bL12_oligo_N_sf"/>
</dbReference>
<dbReference type="NCBIfam" id="TIGR00855">
    <property type="entry name" value="L12"/>
    <property type="match status" value="1"/>
</dbReference>
<dbReference type="PANTHER" id="PTHR45987">
    <property type="entry name" value="39S RIBOSOMAL PROTEIN L12"/>
    <property type="match status" value="1"/>
</dbReference>
<dbReference type="PANTHER" id="PTHR45987:SF4">
    <property type="entry name" value="LARGE RIBOSOMAL SUBUNIT PROTEIN BL12M"/>
    <property type="match status" value="1"/>
</dbReference>
<dbReference type="Pfam" id="PF00542">
    <property type="entry name" value="Ribosomal_L12"/>
    <property type="match status" value="1"/>
</dbReference>
<dbReference type="Pfam" id="PF16320">
    <property type="entry name" value="Ribosomal_L12_N"/>
    <property type="match status" value="1"/>
</dbReference>
<dbReference type="SUPFAM" id="SSF54736">
    <property type="entry name" value="ClpS-like"/>
    <property type="match status" value="1"/>
</dbReference>
<dbReference type="SUPFAM" id="SSF48300">
    <property type="entry name" value="Ribosomal protein L7/12, oligomerisation (N-terminal) domain"/>
    <property type="match status" value="1"/>
</dbReference>
<keyword id="KW-0687">Ribonucleoprotein</keyword>
<keyword id="KW-0689">Ribosomal protein</keyword>